<organism>
    <name type="scientific">Arabidopsis thaliana</name>
    <name type="common">Mouse-ear cress</name>
    <dbReference type="NCBI Taxonomy" id="3702"/>
    <lineage>
        <taxon>Eukaryota</taxon>
        <taxon>Viridiplantae</taxon>
        <taxon>Streptophyta</taxon>
        <taxon>Embryophyta</taxon>
        <taxon>Tracheophyta</taxon>
        <taxon>Spermatophyta</taxon>
        <taxon>Magnoliopsida</taxon>
        <taxon>eudicotyledons</taxon>
        <taxon>Gunneridae</taxon>
        <taxon>Pentapetalae</taxon>
        <taxon>rosids</taxon>
        <taxon>malvids</taxon>
        <taxon>Brassicales</taxon>
        <taxon>Brassicaceae</taxon>
        <taxon>Camelineae</taxon>
        <taxon>Arabidopsis</taxon>
    </lineage>
</organism>
<comment type="function">
    <text evidence="6">Catalyzes the reduction of 3'-oxosphinganine (3-ketodihydrosphingosine/KDS) to sphinganine (dihydrosphingosine/DHS), the second step of de novo sphingolipid biosynthesis. In plants, sphingolipids seems to play a critical role in mineral ion homeostasis, most likely through their involvement in the ion transport functionalities of membrane systems in the root. Is stereospecific for D-erythro-DHS production and does not produce L-threo-DHS.</text>
</comment>
<comment type="catalytic activity">
    <reaction evidence="6">
        <text>sphinganine + NADP(+) = 3-oxosphinganine + NADPH + H(+)</text>
        <dbReference type="Rhea" id="RHEA:22640"/>
        <dbReference type="ChEBI" id="CHEBI:15378"/>
        <dbReference type="ChEBI" id="CHEBI:57783"/>
        <dbReference type="ChEBI" id="CHEBI:57817"/>
        <dbReference type="ChEBI" id="CHEBI:58299"/>
        <dbReference type="ChEBI" id="CHEBI:58349"/>
        <dbReference type="EC" id="1.1.1.102"/>
    </reaction>
</comment>
<comment type="pathway">
    <text>Lipid metabolism; sphingolipid metabolism.</text>
</comment>
<comment type="subcellular location">
    <subcellularLocation>
        <location evidence="8">Endoplasmic reticulum membrane</location>
        <topology evidence="8">Multi-pass membrane protein</topology>
    </subcellularLocation>
</comment>
<comment type="tissue specificity">
    <text evidence="6">Expressed in roots, leaves, stems and flowers.</text>
</comment>
<comment type="disruption phenotype">
    <text evidence="6">No visible phenotype under normal growth conditions, but the double mutants tsc10a and tsc10b are not viable.</text>
</comment>
<comment type="similarity">
    <text evidence="7">Belongs to the short-chain dehydrogenases/reductases (SDR) family.</text>
</comment>
<name>KDSRB_ARATH</name>
<keyword id="KW-0256">Endoplasmic reticulum</keyword>
<keyword id="KW-0443">Lipid metabolism</keyword>
<keyword id="KW-0472">Membrane</keyword>
<keyword id="KW-0521">NADP</keyword>
<keyword id="KW-0547">Nucleotide-binding</keyword>
<keyword id="KW-0560">Oxidoreductase</keyword>
<keyword id="KW-1185">Reference proteome</keyword>
<keyword id="KW-0746">Sphingolipid metabolism</keyword>
<keyword id="KW-0812">Transmembrane</keyword>
<keyword id="KW-1133">Transmembrane helix</keyword>
<evidence type="ECO:0000250" key="1">
    <source>
        <dbReference type="UniProtKB" id="O93868"/>
    </source>
</evidence>
<evidence type="ECO:0000250" key="2">
    <source>
        <dbReference type="UniProtKB" id="P0CR36"/>
    </source>
</evidence>
<evidence type="ECO:0000250" key="3">
    <source>
        <dbReference type="UniProtKB" id="P40471"/>
    </source>
</evidence>
<evidence type="ECO:0000255" key="4"/>
<evidence type="ECO:0000255" key="5">
    <source>
        <dbReference type="PROSITE-ProRule" id="PRU10001"/>
    </source>
</evidence>
<evidence type="ECO:0000269" key="6">
    <source>
    </source>
</evidence>
<evidence type="ECO:0000305" key="7"/>
<evidence type="ECO:0000305" key="8">
    <source>
    </source>
</evidence>
<feature type="chain" id="PRO_0000430306" description="3-dehydrosphinganine reductase TSC10B">
    <location>
        <begin position="1"/>
        <end position="331"/>
    </location>
</feature>
<feature type="topological domain" description="Lumenal" evidence="4">
    <location>
        <begin position="1"/>
        <end position="7"/>
    </location>
</feature>
<feature type="transmembrane region" description="Helical; Name=1" evidence="4">
    <location>
        <begin position="8"/>
        <end position="28"/>
    </location>
</feature>
<feature type="topological domain" description="Cytoplasmic" evidence="4">
    <location>
        <begin position="29"/>
        <end position="262"/>
    </location>
</feature>
<feature type="transmembrane region" description="Helical; Name=2" evidence="4">
    <location>
        <begin position="263"/>
        <end position="283"/>
    </location>
</feature>
<feature type="topological domain" description="Lumenal" evidence="4">
    <location>
        <begin position="284"/>
        <end position="286"/>
    </location>
</feature>
<feature type="transmembrane region" description="Helical; Name=3" evidence="4">
    <location>
        <begin position="287"/>
        <end position="307"/>
    </location>
</feature>
<feature type="topological domain" description="Cytoplasmic" evidence="4">
    <location>
        <begin position="308"/>
        <end position="331"/>
    </location>
</feature>
<feature type="short sequence motif" description="GXSXG" evidence="3">
    <location>
        <begin position="44"/>
        <end position="48"/>
    </location>
</feature>
<feature type="active site" description="Proton donor" evidence="1">
    <location>
        <position position="172"/>
    </location>
</feature>
<feature type="active site" description="Proton acceptor" evidence="5">
    <location>
        <position position="186"/>
    </location>
</feature>
<feature type="active site" description="Lowers pKa of active site Tyr" evidence="1">
    <location>
        <position position="190"/>
    </location>
</feature>
<feature type="binding site" evidence="2">
    <location>
        <position position="44"/>
    </location>
    <ligand>
        <name>NADPH</name>
        <dbReference type="ChEBI" id="CHEBI:57783"/>
    </ligand>
</feature>
<feature type="binding site" evidence="2">
    <location>
        <position position="46"/>
    </location>
    <ligand>
        <name>NADPH</name>
        <dbReference type="ChEBI" id="CHEBI:57783"/>
    </ligand>
</feature>
<feature type="binding site" evidence="2">
    <location>
        <position position="47"/>
    </location>
    <ligand>
        <name>NADPH</name>
        <dbReference type="ChEBI" id="CHEBI:57783"/>
    </ligand>
</feature>
<feature type="binding site" evidence="2">
    <location>
        <position position="48"/>
    </location>
    <ligand>
        <name>NADPH</name>
        <dbReference type="ChEBI" id="CHEBI:57783"/>
    </ligand>
</feature>
<feature type="binding site" evidence="2">
    <location>
        <position position="69"/>
    </location>
    <ligand>
        <name>NADPH</name>
        <dbReference type="ChEBI" id="CHEBI:57783"/>
    </ligand>
</feature>
<feature type="binding site" evidence="2">
    <location>
        <position position="73"/>
    </location>
    <ligand>
        <name>NADPH</name>
        <dbReference type="ChEBI" id="CHEBI:57783"/>
    </ligand>
</feature>
<feature type="binding site" evidence="2">
    <location>
        <position position="95"/>
    </location>
    <ligand>
        <name>NADPH</name>
        <dbReference type="ChEBI" id="CHEBI:57783"/>
    </ligand>
</feature>
<feature type="binding site" evidence="1">
    <location>
        <position position="186"/>
    </location>
    <ligand>
        <name>NADP(+)</name>
        <dbReference type="ChEBI" id="CHEBI:58349"/>
    </ligand>
</feature>
<feature type="binding site" evidence="1">
    <location>
        <position position="190"/>
    </location>
    <ligand>
        <name>NADP(+)</name>
        <dbReference type="ChEBI" id="CHEBI:58349"/>
    </ligand>
</feature>
<dbReference type="EC" id="1.1.1.102"/>
<dbReference type="EMBL" id="AC069326">
    <property type="status" value="NOT_ANNOTATED_CDS"/>
    <property type="molecule type" value="Genomic_DNA"/>
</dbReference>
<dbReference type="EMBL" id="CP002688">
    <property type="protein sequence ID" value="AED92669.1"/>
    <property type="molecule type" value="Genomic_DNA"/>
</dbReference>
<dbReference type="RefSeq" id="NP_197421.1">
    <property type="nucleotide sequence ID" value="NM_121925.4"/>
</dbReference>
<dbReference type="SMR" id="F4JZN6"/>
<dbReference type="FunCoup" id="F4JZN6">
    <property type="interactions" value="3362"/>
</dbReference>
<dbReference type="STRING" id="3702.F4JZN6"/>
<dbReference type="iPTMnet" id="F4JZN6"/>
<dbReference type="PaxDb" id="3702-AT5G19200.1"/>
<dbReference type="ProteomicsDB" id="234165"/>
<dbReference type="EnsemblPlants" id="AT5G19200.1">
    <property type="protein sequence ID" value="AT5G19200.1"/>
    <property type="gene ID" value="AT5G19200"/>
</dbReference>
<dbReference type="GeneID" id="832040"/>
<dbReference type="Gramene" id="AT5G19200.1">
    <property type="protein sequence ID" value="AT5G19200.1"/>
    <property type="gene ID" value="AT5G19200"/>
</dbReference>
<dbReference type="KEGG" id="ath:AT5G19200"/>
<dbReference type="Araport" id="AT5G19200"/>
<dbReference type="TAIR" id="AT5G19200">
    <property type="gene designation" value="TSC10B"/>
</dbReference>
<dbReference type="eggNOG" id="KOG1210">
    <property type="taxonomic scope" value="Eukaryota"/>
</dbReference>
<dbReference type="HOGENOM" id="CLU_010194_3_2_1"/>
<dbReference type="InParanoid" id="F4JZN6"/>
<dbReference type="OMA" id="RSEARCH"/>
<dbReference type="PhylomeDB" id="F4JZN6"/>
<dbReference type="UniPathway" id="UPA00222"/>
<dbReference type="PRO" id="PR:F4JZN6"/>
<dbReference type="Proteomes" id="UP000006548">
    <property type="component" value="Chromosome 5"/>
</dbReference>
<dbReference type="ExpressionAtlas" id="F4JZN6">
    <property type="expression patterns" value="baseline and differential"/>
</dbReference>
<dbReference type="GO" id="GO:0005789">
    <property type="term" value="C:endoplasmic reticulum membrane"/>
    <property type="evidence" value="ECO:0000314"/>
    <property type="project" value="TAIR"/>
</dbReference>
<dbReference type="GO" id="GO:0047560">
    <property type="term" value="F:3-dehydrosphinganine reductase activity"/>
    <property type="evidence" value="ECO:0000314"/>
    <property type="project" value="TAIR"/>
</dbReference>
<dbReference type="GO" id="GO:0070402">
    <property type="term" value="F:NADPH binding"/>
    <property type="evidence" value="ECO:0000250"/>
    <property type="project" value="UniProtKB"/>
</dbReference>
<dbReference type="GO" id="GO:0006666">
    <property type="term" value="P:3-keto-sphinganine metabolic process"/>
    <property type="evidence" value="ECO:0000250"/>
    <property type="project" value="UniProtKB"/>
</dbReference>
<dbReference type="GO" id="GO:0030148">
    <property type="term" value="P:sphingolipid biosynthetic process"/>
    <property type="evidence" value="ECO:0000315"/>
    <property type="project" value="TAIR"/>
</dbReference>
<dbReference type="CDD" id="cd08939">
    <property type="entry name" value="KDSR-like_SDR_c"/>
    <property type="match status" value="1"/>
</dbReference>
<dbReference type="FunFam" id="3.40.50.720:FF:000165">
    <property type="entry name" value="3-ketodihydrosphingosine reductase"/>
    <property type="match status" value="1"/>
</dbReference>
<dbReference type="Gene3D" id="3.40.50.720">
    <property type="entry name" value="NAD(P)-binding Rossmann-like Domain"/>
    <property type="match status" value="1"/>
</dbReference>
<dbReference type="InterPro" id="IPR045022">
    <property type="entry name" value="KDSR-like"/>
</dbReference>
<dbReference type="InterPro" id="IPR036291">
    <property type="entry name" value="NAD(P)-bd_dom_sf"/>
</dbReference>
<dbReference type="InterPro" id="IPR020904">
    <property type="entry name" value="Sc_DH/Rdtase_CS"/>
</dbReference>
<dbReference type="InterPro" id="IPR002347">
    <property type="entry name" value="SDR_fam"/>
</dbReference>
<dbReference type="PANTHER" id="PTHR43550">
    <property type="entry name" value="3-KETODIHYDROSPHINGOSINE REDUCTASE"/>
    <property type="match status" value="1"/>
</dbReference>
<dbReference type="PANTHER" id="PTHR43550:SF3">
    <property type="entry name" value="3-KETODIHYDROSPHINGOSINE REDUCTASE"/>
    <property type="match status" value="1"/>
</dbReference>
<dbReference type="Pfam" id="PF00106">
    <property type="entry name" value="adh_short"/>
    <property type="match status" value="1"/>
</dbReference>
<dbReference type="PRINTS" id="PR00081">
    <property type="entry name" value="GDHRDH"/>
</dbReference>
<dbReference type="SUPFAM" id="SSF51735">
    <property type="entry name" value="NAD(P)-binding Rossmann-fold domains"/>
    <property type="match status" value="1"/>
</dbReference>
<dbReference type="PROSITE" id="PS00061">
    <property type="entry name" value="ADH_SHORT"/>
    <property type="match status" value="1"/>
</dbReference>
<protein>
    <recommendedName>
        <fullName>3-dehydrosphinganine reductase TSC10B</fullName>
        <ecNumber>1.1.1.102</ecNumber>
    </recommendedName>
    <alternativeName>
        <fullName>3-ketodihydrosphingosine reductase</fullName>
        <shortName>KDS reductase</shortName>
    </alternativeName>
    <alternativeName>
        <fullName>3-ketosphinganine reductase</fullName>
    </alternativeName>
</protein>
<accession>F4JZN6</accession>
<reference key="1">
    <citation type="journal article" date="2000" name="Nature">
        <title>Sequence and analysis of chromosome 5 of the plant Arabidopsis thaliana.</title>
        <authorList>
            <person name="Tabata S."/>
            <person name="Kaneko T."/>
            <person name="Nakamura Y."/>
            <person name="Kotani H."/>
            <person name="Kato T."/>
            <person name="Asamizu E."/>
            <person name="Miyajima N."/>
            <person name="Sasamoto S."/>
            <person name="Kimura T."/>
            <person name="Hosouchi T."/>
            <person name="Kawashima K."/>
            <person name="Kohara M."/>
            <person name="Matsumoto M."/>
            <person name="Matsuno A."/>
            <person name="Muraki A."/>
            <person name="Nakayama S."/>
            <person name="Nakazaki N."/>
            <person name="Naruo K."/>
            <person name="Okumura S."/>
            <person name="Shinpo S."/>
            <person name="Takeuchi C."/>
            <person name="Wada T."/>
            <person name="Watanabe A."/>
            <person name="Yamada M."/>
            <person name="Yasuda M."/>
            <person name="Sato S."/>
            <person name="de la Bastide M."/>
            <person name="Huang E."/>
            <person name="Spiegel L."/>
            <person name="Gnoj L."/>
            <person name="O'Shaughnessy A."/>
            <person name="Preston R."/>
            <person name="Habermann K."/>
            <person name="Murray J."/>
            <person name="Johnson D."/>
            <person name="Rohlfing T."/>
            <person name="Nelson J."/>
            <person name="Stoneking T."/>
            <person name="Pepin K."/>
            <person name="Spieth J."/>
            <person name="Sekhon M."/>
            <person name="Armstrong J."/>
            <person name="Becker M."/>
            <person name="Belter E."/>
            <person name="Cordum H."/>
            <person name="Cordes M."/>
            <person name="Courtney L."/>
            <person name="Courtney W."/>
            <person name="Dante M."/>
            <person name="Du H."/>
            <person name="Edwards J."/>
            <person name="Fryman J."/>
            <person name="Haakensen B."/>
            <person name="Lamar E."/>
            <person name="Latreille P."/>
            <person name="Leonard S."/>
            <person name="Meyer R."/>
            <person name="Mulvaney E."/>
            <person name="Ozersky P."/>
            <person name="Riley A."/>
            <person name="Strowmatt C."/>
            <person name="Wagner-McPherson C."/>
            <person name="Wollam A."/>
            <person name="Yoakum M."/>
            <person name="Bell M."/>
            <person name="Dedhia N."/>
            <person name="Parnell L."/>
            <person name="Shah R."/>
            <person name="Rodriguez M."/>
            <person name="Hoon See L."/>
            <person name="Vil D."/>
            <person name="Baker J."/>
            <person name="Kirchoff K."/>
            <person name="Toth K."/>
            <person name="King L."/>
            <person name="Bahret A."/>
            <person name="Miller B."/>
            <person name="Marra M.A."/>
            <person name="Martienssen R."/>
            <person name="McCombie W.R."/>
            <person name="Wilson R.K."/>
            <person name="Murphy G."/>
            <person name="Bancroft I."/>
            <person name="Volckaert G."/>
            <person name="Wambutt R."/>
            <person name="Duesterhoeft A."/>
            <person name="Stiekema W."/>
            <person name="Pohl T."/>
            <person name="Entian K.-D."/>
            <person name="Terryn N."/>
            <person name="Hartley N."/>
            <person name="Bent E."/>
            <person name="Johnson S."/>
            <person name="Langham S.-A."/>
            <person name="McCullagh B."/>
            <person name="Robben J."/>
            <person name="Grymonprez B."/>
            <person name="Zimmermann W."/>
            <person name="Ramsperger U."/>
            <person name="Wedler H."/>
            <person name="Balke K."/>
            <person name="Wedler E."/>
            <person name="Peters S."/>
            <person name="van Staveren M."/>
            <person name="Dirkse W."/>
            <person name="Mooijman P."/>
            <person name="Klein Lankhorst R."/>
            <person name="Weitzenegger T."/>
            <person name="Bothe G."/>
            <person name="Rose M."/>
            <person name="Hauf J."/>
            <person name="Berneiser S."/>
            <person name="Hempel S."/>
            <person name="Feldpausch M."/>
            <person name="Lamberth S."/>
            <person name="Villarroel R."/>
            <person name="Gielen J."/>
            <person name="Ardiles W."/>
            <person name="Bents O."/>
            <person name="Lemcke K."/>
            <person name="Kolesov G."/>
            <person name="Mayer K.F.X."/>
            <person name="Rudd S."/>
            <person name="Schoof H."/>
            <person name="Schueller C."/>
            <person name="Zaccaria P."/>
            <person name="Mewes H.-W."/>
            <person name="Bevan M."/>
            <person name="Fransz P.F."/>
        </authorList>
    </citation>
    <scope>NUCLEOTIDE SEQUENCE [LARGE SCALE GENOMIC DNA]</scope>
    <source>
        <strain>cv. Columbia</strain>
    </source>
</reference>
<reference key="2">
    <citation type="journal article" date="2017" name="Plant J.">
        <title>Araport11: a complete reannotation of the Arabidopsis thaliana reference genome.</title>
        <authorList>
            <person name="Cheng C.Y."/>
            <person name="Krishnakumar V."/>
            <person name="Chan A.P."/>
            <person name="Thibaud-Nissen F."/>
            <person name="Schobel S."/>
            <person name="Town C.D."/>
        </authorList>
    </citation>
    <scope>GENOME REANNOTATION</scope>
    <source>
        <strain>cv. Columbia</strain>
    </source>
</reference>
<reference key="3">
    <citation type="journal article" date="2011" name="Plant Cell">
        <title>Sphingolipids in the root play an important role in regulating the leaf ionome in Arabidopsis thaliana.</title>
        <authorList>
            <person name="Chao D.Y."/>
            <person name="Gable K."/>
            <person name="Chen M."/>
            <person name="Baxter I."/>
            <person name="Dietrich C.R."/>
            <person name="Cahoon E.B."/>
            <person name="Guerinot M.L."/>
            <person name="Lahner B."/>
            <person name="Lu S."/>
            <person name="Markham J.E."/>
            <person name="Morrissey J."/>
            <person name="Han G."/>
            <person name="Gupta S.D."/>
            <person name="Harmon J.M."/>
            <person name="Jaworski J.G."/>
            <person name="Dunn T.M."/>
            <person name="Salt D.E."/>
        </authorList>
    </citation>
    <scope>FUNCTION</scope>
    <scope>CATALYTIC ACTIVITY</scope>
    <scope>STEREOSPECIFICITY</scope>
    <scope>SUBCELLULAR LOCATION</scope>
    <scope>TISSUE SPECIFICITY</scope>
    <scope>DISRUPTION PHENOTYPE</scope>
</reference>
<proteinExistence type="evidence at protein level"/>
<sequence>MAAIFSLFLFFILFIVSLLIILSFIVRPRSVTIPIKFRHVFITGGSSGIGLALAHRAVSEGAKVSILARSTEKLAEAKRSIQLATGVEVATFSADVRDYDAVSKAIDESGPIDVLIVNQGVFIGKELEKQSPEEVKFMIDVNLTGSFNVIKAALPAMKAREGRGPASISLVSSQAGQAGIYGYTAYSASKFGLQGLAQALQQEVISDGIHVTLLFPPDTDTPGFEQELKKRPELTSIIAASSGSMKTNEVAKICFDGIKAGKFTVTCHFIGFLLSIASTGMSPQGSFWLALTEVMFGGLIRLASLVFQWQWYKTIEKWSQRNKKEVNSKLA</sequence>
<gene>
    <name type="primary">TSC10B</name>
    <name type="ordered locus">At5g19200</name>
    <name type="ORF">T24G5</name>
</gene>